<proteinExistence type="inferred from homology"/>
<dbReference type="EC" id="6.1.1.1" evidence="1"/>
<dbReference type="EMBL" id="CP001398">
    <property type="protein sequence ID" value="ACS33572.1"/>
    <property type="molecule type" value="Genomic_DNA"/>
</dbReference>
<dbReference type="RefSeq" id="WP_015858685.1">
    <property type="nucleotide sequence ID" value="NC_012804.1"/>
</dbReference>
<dbReference type="SMR" id="C5A5R0"/>
<dbReference type="STRING" id="593117.TGAM_1070"/>
<dbReference type="PaxDb" id="593117-TGAM_1070"/>
<dbReference type="GeneID" id="7986944"/>
<dbReference type="KEGG" id="tga:TGAM_1070"/>
<dbReference type="PATRIC" id="fig|593117.10.peg.1069"/>
<dbReference type="eggNOG" id="arCOG01886">
    <property type="taxonomic scope" value="Archaea"/>
</dbReference>
<dbReference type="HOGENOM" id="CLU_035267_1_1_2"/>
<dbReference type="OrthoDB" id="8389at2157"/>
<dbReference type="Proteomes" id="UP000001488">
    <property type="component" value="Chromosome"/>
</dbReference>
<dbReference type="GO" id="GO:0005737">
    <property type="term" value="C:cytoplasm"/>
    <property type="evidence" value="ECO:0007669"/>
    <property type="project" value="UniProtKB-SubCell"/>
</dbReference>
<dbReference type="GO" id="GO:0005524">
    <property type="term" value="F:ATP binding"/>
    <property type="evidence" value="ECO:0007669"/>
    <property type="project" value="UniProtKB-UniRule"/>
</dbReference>
<dbReference type="GO" id="GO:0004831">
    <property type="term" value="F:tyrosine-tRNA ligase activity"/>
    <property type="evidence" value="ECO:0007669"/>
    <property type="project" value="UniProtKB-UniRule"/>
</dbReference>
<dbReference type="GO" id="GO:0006437">
    <property type="term" value="P:tyrosyl-tRNA aminoacylation"/>
    <property type="evidence" value="ECO:0007669"/>
    <property type="project" value="UniProtKB-UniRule"/>
</dbReference>
<dbReference type="Gene3D" id="3.40.50.620">
    <property type="entry name" value="HUPs"/>
    <property type="match status" value="1"/>
</dbReference>
<dbReference type="Gene3D" id="1.10.240.10">
    <property type="entry name" value="Tyrosyl-Transfer RNA Synthetase"/>
    <property type="match status" value="1"/>
</dbReference>
<dbReference type="HAMAP" id="MF_02009">
    <property type="entry name" value="Tyr_tRNA_synth_type4"/>
    <property type="match status" value="1"/>
</dbReference>
<dbReference type="InterPro" id="IPR002305">
    <property type="entry name" value="aa-tRNA-synth_Ic"/>
</dbReference>
<dbReference type="InterPro" id="IPR014729">
    <property type="entry name" value="Rossmann-like_a/b/a_fold"/>
</dbReference>
<dbReference type="InterPro" id="IPR023678">
    <property type="entry name" value="Tyr-tRNA-ligase_4"/>
</dbReference>
<dbReference type="InterPro" id="IPR023617">
    <property type="entry name" value="Tyr-tRNA-ligase_arc/euk-type"/>
</dbReference>
<dbReference type="InterPro" id="IPR050489">
    <property type="entry name" value="Tyr-tRNA_synthase"/>
</dbReference>
<dbReference type="NCBIfam" id="NF006330">
    <property type="entry name" value="PRK08560.1"/>
    <property type="match status" value="1"/>
</dbReference>
<dbReference type="PANTHER" id="PTHR46264:SF4">
    <property type="entry name" value="TYROSINE--TRNA LIGASE, CYTOPLASMIC"/>
    <property type="match status" value="1"/>
</dbReference>
<dbReference type="PANTHER" id="PTHR46264">
    <property type="entry name" value="TYROSINE-TRNA LIGASE"/>
    <property type="match status" value="1"/>
</dbReference>
<dbReference type="Pfam" id="PF00579">
    <property type="entry name" value="tRNA-synt_1b"/>
    <property type="match status" value="1"/>
</dbReference>
<dbReference type="PIRSF" id="PIRSF006588">
    <property type="entry name" value="TyrRS_arch_euk"/>
    <property type="match status" value="1"/>
</dbReference>
<dbReference type="SUPFAM" id="SSF52374">
    <property type="entry name" value="Nucleotidylyl transferase"/>
    <property type="match status" value="1"/>
</dbReference>
<gene>
    <name evidence="1" type="primary">tyrS</name>
    <name type="ordered locus">TGAM_1070</name>
</gene>
<comment type="function">
    <text evidence="1">Catalyzes the attachment of tyrosine to tRNA(Tyr) in a two-step reaction: tyrosine is first activated by ATP to form Tyr-AMP and then transferred to the acceptor end of tRNA(Tyr).</text>
</comment>
<comment type="catalytic activity">
    <reaction evidence="1">
        <text>tRNA(Tyr) + L-tyrosine + ATP = L-tyrosyl-tRNA(Tyr) + AMP + diphosphate + H(+)</text>
        <dbReference type="Rhea" id="RHEA:10220"/>
        <dbReference type="Rhea" id="RHEA-COMP:9706"/>
        <dbReference type="Rhea" id="RHEA-COMP:9707"/>
        <dbReference type="ChEBI" id="CHEBI:15378"/>
        <dbReference type="ChEBI" id="CHEBI:30616"/>
        <dbReference type="ChEBI" id="CHEBI:33019"/>
        <dbReference type="ChEBI" id="CHEBI:58315"/>
        <dbReference type="ChEBI" id="CHEBI:78442"/>
        <dbReference type="ChEBI" id="CHEBI:78536"/>
        <dbReference type="ChEBI" id="CHEBI:456215"/>
        <dbReference type="EC" id="6.1.1.1"/>
    </reaction>
</comment>
<comment type="subunit">
    <text evidence="1">Homodimer.</text>
</comment>
<comment type="subcellular location">
    <subcellularLocation>
        <location evidence="1">Cytoplasm</location>
    </subcellularLocation>
</comment>
<comment type="similarity">
    <text evidence="1">Belongs to the class-I aminoacyl-tRNA synthetase family. TyrS type 4 subfamily.</text>
</comment>
<feature type="chain" id="PRO_1000216406" description="Tyrosine--tRNA ligase">
    <location>
        <begin position="1"/>
        <end position="375"/>
    </location>
</feature>
<feature type="short sequence motif" description="'KMSKS' region">
    <location>
        <begin position="251"/>
        <end position="255"/>
    </location>
</feature>
<feature type="binding site" evidence="1">
    <location>
        <position position="37"/>
    </location>
    <ligand>
        <name>L-tyrosine</name>
        <dbReference type="ChEBI" id="CHEBI:58315"/>
    </ligand>
</feature>
<feature type="binding site" evidence="1">
    <location>
        <position position="168"/>
    </location>
    <ligand>
        <name>L-tyrosine</name>
        <dbReference type="ChEBI" id="CHEBI:58315"/>
    </ligand>
</feature>
<feature type="binding site" evidence="1">
    <location>
        <position position="172"/>
    </location>
    <ligand>
        <name>L-tyrosine</name>
        <dbReference type="ChEBI" id="CHEBI:58315"/>
    </ligand>
</feature>
<feature type="binding site" evidence="1">
    <location>
        <position position="175"/>
    </location>
    <ligand>
        <name>L-tyrosine</name>
        <dbReference type="ChEBI" id="CHEBI:58315"/>
    </ligand>
</feature>
<feature type="binding site" evidence="1">
    <location>
        <position position="190"/>
    </location>
    <ligand>
        <name>L-tyrosine</name>
        <dbReference type="ChEBI" id="CHEBI:58315"/>
    </ligand>
</feature>
<feature type="binding site" evidence="1">
    <location>
        <position position="254"/>
    </location>
    <ligand>
        <name>ATP</name>
        <dbReference type="ChEBI" id="CHEBI:30616"/>
    </ligand>
</feature>
<protein>
    <recommendedName>
        <fullName evidence="1">Tyrosine--tRNA ligase</fullName>
        <ecNumber evidence="1">6.1.1.1</ecNumber>
    </recommendedName>
    <alternativeName>
        <fullName evidence="1">Tyrosyl-tRNA synthetase</fullName>
        <shortName evidence="1">TyrRS</shortName>
    </alternativeName>
</protein>
<accession>C5A5R0</accession>
<name>SYY_THEGJ</name>
<keyword id="KW-0030">Aminoacyl-tRNA synthetase</keyword>
<keyword id="KW-0067">ATP-binding</keyword>
<keyword id="KW-0963">Cytoplasm</keyword>
<keyword id="KW-0436">Ligase</keyword>
<keyword id="KW-0547">Nucleotide-binding</keyword>
<keyword id="KW-0648">Protein biosynthesis</keyword>
<keyword id="KW-1185">Reference proteome</keyword>
<evidence type="ECO:0000255" key="1">
    <source>
        <dbReference type="HAMAP-Rule" id="MF_02009"/>
    </source>
</evidence>
<organism>
    <name type="scientific">Thermococcus gammatolerans (strain DSM 15229 / JCM 11827 / EJ3)</name>
    <dbReference type="NCBI Taxonomy" id="593117"/>
    <lineage>
        <taxon>Archaea</taxon>
        <taxon>Methanobacteriati</taxon>
        <taxon>Methanobacteriota</taxon>
        <taxon>Thermococci</taxon>
        <taxon>Thermococcales</taxon>
        <taxon>Thermococcaceae</taxon>
        <taxon>Thermococcus</taxon>
    </lineage>
</organism>
<sequence length="375" mass="43313">MDVEKKIELIKKKPTEELLTEENLRHLFEVGIPMQHYIGFEISGYIHLGTGLMAGAKIADLQKAGIKTRIFLADWHSWINDKLGGDLETIQKVALTYFKEGMKQSIKVMGGDPDKVEFVLASEILEKGDYWQTVIDISKNVTLARMMRSITIMGRQMGESIDFAKLIYPAMQVADIFYQGVTIAHAGMDQRKAHVIAIEVAQKLKYHPLEWKGEKLKPVALHHHLLLGLQEPPVWPIESEEQFKELKTQMKMSKSKPYSAVFIHDSPEEIRQKLRKAFCPAREVRYNPVLDWAEYIIFREEPTEFTIHRPAKFGGDVTYTTSEELKRDFAEGKLHPLDLKNAVAEYLIELLKPVREYFEKHPEPLELMREVKITR</sequence>
<reference key="1">
    <citation type="journal article" date="2007" name="Genome Biol.">
        <title>Genome analysis and genome-wide proteomics of Thermococcus gammatolerans, the most radioresistant organism known amongst the Archaea.</title>
        <authorList>
            <person name="Zivanovic Y."/>
            <person name="Armengaud J."/>
            <person name="Lagorce A."/>
            <person name="Leplat C."/>
            <person name="Guerin P."/>
            <person name="Dutertre M."/>
            <person name="Anthouard V."/>
            <person name="Forterre P."/>
            <person name="Wincker P."/>
            <person name="Confalonieri F."/>
        </authorList>
    </citation>
    <scope>NUCLEOTIDE SEQUENCE [LARGE SCALE GENOMIC DNA]</scope>
    <source>
        <strain>DSM 15229 / JCM 11827 / EJ3</strain>
    </source>
</reference>